<feature type="signal peptide" evidence="1">
    <location>
        <begin position="1"/>
        <end position="22"/>
    </location>
</feature>
<feature type="chain" id="PRO_0000370350" description="Metabotropic glutamate receptor-like protein F">
    <location>
        <begin position="23"/>
        <end position="770"/>
    </location>
</feature>
<feature type="topological domain" description="Extracellular" evidence="1">
    <location>
        <begin position="23"/>
        <end position="370"/>
    </location>
</feature>
<feature type="transmembrane region" description="Helical; Name=1" evidence="1">
    <location>
        <begin position="371"/>
        <end position="391"/>
    </location>
</feature>
<feature type="topological domain" description="Cytoplasmic" evidence="1">
    <location>
        <begin position="392"/>
        <end position="405"/>
    </location>
</feature>
<feature type="transmembrane region" description="Helical; Name=2" evidence="1">
    <location>
        <begin position="406"/>
        <end position="426"/>
    </location>
</feature>
<feature type="topological domain" description="Extracellular" evidence="1">
    <location>
        <begin position="427"/>
        <end position="442"/>
    </location>
</feature>
<feature type="transmembrane region" description="Helical; Name=3" evidence="1">
    <location>
        <begin position="443"/>
        <end position="463"/>
    </location>
</feature>
<feature type="topological domain" description="Cytoplasmic" evidence="1">
    <location>
        <begin position="464"/>
        <end position="483"/>
    </location>
</feature>
<feature type="transmembrane region" description="Helical; Name=4" evidence="1">
    <location>
        <begin position="484"/>
        <end position="504"/>
    </location>
</feature>
<feature type="topological domain" description="Extracellular" evidence="1">
    <location>
        <begin position="505"/>
        <end position="528"/>
    </location>
</feature>
<feature type="transmembrane region" description="Helical; Name=5" evidence="1">
    <location>
        <begin position="529"/>
        <end position="549"/>
    </location>
</feature>
<feature type="topological domain" description="Cytoplasmic" evidence="1">
    <location>
        <begin position="550"/>
        <end position="565"/>
    </location>
</feature>
<feature type="transmembrane region" description="Helical; Name=6" evidence="1">
    <location>
        <begin position="566"/>
        <end position="586"/>
    </location>
</feature>
<feature type="topological domain" description="Extracellular" evidence="1">
    <location>
        <begin position="587"/>
        <end position="594"/>
    </location>
</feature>
<feature type="transmembrane region" description="Helical; Name=7" evidence="1">
    <location>
        <begin position="595"/>
        <end position="615"/>
    </location>
</feature>
<feature type="topological domain" description="Cytoplasmic" evidence="1">
    <location>
        <begin position="616"/>
        <end position="770"/>
    </location>
</feature>
<feature type="region of interest" description="Disordered" evidence="2">
    <location>
        <begin position="639"/>
        <end position="740"/>
    </location>
</feature>
<feature type="coiled-coil region" evidence="1">
    <location>
        <begin position="715"/>
        <end position="760"/>
    </location>
</feature>
<feature type="compositionally biased region" description="Basic and acidic residues" evidence="2">
    <location>
        <begin position="676"/>
        <end position="693"/>
    </location>
</feature>
<feature type="compositionally biased region" description="Basic and acidic residues" evidence="2">
    <location>
        <begin position="730"/>
        <end position="740"/>
    </location>
</feature>
<feature type="glycosylation site" description="N-linked (GlcNAc...) asparagine" evidence="1">
    <location>
        <position position="24"/>
    </location>
</feature>
<feature type="glycosylation site" description="N-linked (GlcNAc...) asparagine" evidence="1">
    <location>
        <position position="185"/>
    </location>
</feature>
<feature type="glycosylation site" description="N-linked (GlcNAc...) asparagine" evidence="1">
    <location>
        <position position="260"/>
    </location>
</feature>
<feature type="glycosylation site" description="N-linked (GlcNAc...) asparagine" evidence="1">
    <location>
        <position position="286"/>
    </location>
</feature>
<feature type="glycosylation site" description="N-linked (GlcNAc...) asparagine" evidence="1">
    <location>
        <position position="319"/>
    </location>
</feature>
<feature type="glycosylation site" description="N-linked (GlcNAc...) asparagine" evidence="1">
    <location>
        <position position="344"/>
    </location>
</feature>
<organism>
    <name type="scientific">Dictyostelium discoideum</name>
    <name type="common">Social amoeba</name>
    <dbReference type="NCBI Taxonomy" id="44689"/>
    <lineage>
        <taxon>Eukaryota</taxon>
        <taxon>Amoebozoa</taxon>
        <taxon>Evosea</taxon>
        <taxon>Eumycetozoa</taxon>
        <taxon>Dictyostelia</taxon>
        <taxon>Dictyosteliales</taxon>
        <taxon>Dictyosteliaceae</taxon>
        <taxon>Dictyostelium</taxon>
    </lineage>
</organism>
<dbReference type="EMBL" id="AAFI02000045">
    <property type="protein sequence ID" value="EAL66367.1"/>
    <property type="molecule type" value="Genomic_DNA"/>
</dbReference>
<dbReference type="RefSeq" id="XP_640346.1">
    <property type="nucleotide sequence ID" value="XM_635254.1"/>
</dbReference>
<dbReference type="SMR" id="Q54SW3"/>
<dbReference type="FunCoup" id="Q54SW3">
    <property type="interactions" value="12"/>
</dbReference>
<dbReference type="GlyCosmos" id="Q54SW3">
    <property type="glycosylation" value="6 sites, No reported glycans"/>
</dbReference>
<dbReference type="GlyGen" id="Q54SW3">
    <property type="glycosylation" value="6 sites"/>
</dbReference>
<dbReference type="PaxDb" id="44689-DDB0231978"/>
<dbReference type="EnsemblProtists" id="EAL66367">
    <property type="protein sequence ID" value="EAL66367"/>
    <property type="gene ID" value="DDB_G0282175"/>
</dbReference>
<dbReference type="GeneID" id="8623446"/>
<dbReference type="KEGG" id="ddi:DDB_G0282175"/>
<dbReference type="dictyBase" id="DDB_G0282175">
    <property type="gene designation" value="grlF"/>
</dbReference>
<dbReference type="VEuPathDB" id="AmoebaDB:DDB_G0282175"/>
<dbReference type="eggNOG" id="KOG1055">
    <property type="taxonomic scope" value="Eukaryota"/>
</dbReference>
<dbReference type="HOGENOM" id="CLU_365408_0_0_1"/>
<dbReference type="InParanoid" id="Q54SW3"/>
<dbReference type="PhylomeDB" id="Q54SW3"/>
<dbReference type="PRO" id="PR:Q54SW3"/>
<dbReference type="Proteomes" id="UP000002195">
    <property type="component" value="Chromosome 3"/>
</dbReference>
<dbReference type="GO" id="GO:0005886">
    <property type="term" value="C:plasma membrane"/>
    <property type="evidence" value="ECO:0000318"/>
    <property type="project" value="GO_Central"/>
</dbReference>
<dbReference type="GO" id="GO:0004930">
    <property type="term" value="F:G protein-coupled receptor activity"/>
    <property type="evidence" value="ECO:0000318"/>
    <property type="project" value="GO_Central"/>
</dbReference>
<dbReference type="GO" id="GO:0007186">
    <property type="term" value="P:G protein-coupled receptor signaling pathway"/>
    <property type="evidence" value="ECO:0000318"/>
    <property type="project" value="GO_Central"/>
</dbReference>
<dbReference type="CDD" id="cd15047">
    <property type="entry name" value="7tmC_GABA-B-like"/>
    <property type="match status" value="1"/>
</dbReference>
<dbReference type="Gene3D" id="3.40.50.2300">
    <property type="match status" value="2"/>
</dbReference>
<dbReference type="InterPro" id="IPR017978">
    <property type="entry name" value="GPCR_3_C"/>
</dbReference>
<dbReference type="InterPro" id="IPR051530">
    <property type="entry name" value="mGluR/GABA-B-like"/>
</dbReference>
<dbReference type="InterPro" id="IPR003760">
    <property type="entry name" value="PnrA-like"/>
</dbReference>
<dbReference type="PANTHER" id="PTHR46924:SF2">
    <property type="entry name" value="METABOTROPIC GLUTAMATE RECEPTOR-LIKE PROTEIN A-RELATED"/>
    <property type="match status" value="1"/>
</dbReference>
<dbReference type="PANTHER" id="PTHR46924">
    <property type="entry name" value="METABOTROPIC GLUTAMATE RECEPTOR-LIKE PROTEIN C-RELATED-RELATED"/>
    <property type="match status" value="1"/>
</dbReference>
<dbReference type="Pfam" id="PF00003">
    <property type="entry name" value="7tm_3"/>
    <property type="match status" value="1"/>
</dbReference>
<dbReference type="Pfam" id="PF02608">
    <property type="entry name" value="Bmp"/>
    <property type="match status" value="1"/>
</dbReference>
<dbReference type="PROSITE" id="PS50259">
    <property type="entry name" value="G_PROTEIN_RECEP_F3_4"/>
    <property type="match status" value="1"/>
</dbReference>
<accession>Q54SW3</accession>
<reference key="1">
    <citation type="journal article" date="2005" name="Nature">
        <title>The genome of the social amoeba Dictyostelium discoideum.</title>
        <authorList>
            <person name="Eichinger L."/>
            <person name="Pachebat J.A."/>
            <person name="Gloeckner G."/>
            <person name="Rajandream M.A."/>
            <person name="Sucgang R."/>
            <person name="Berriman M."/>
            <person name="Song J."/>
            <person name="Olsen R."/>
            <person name="Szafranski K."/>
            <person name="Xu Q."/>
            <person name="Tunggal B."/>
            <person name="Kummerfeld S."/>
            <person name="Madera M."/>
            <person name="Konfortov B.A."/>
            <person name="Rivero F."/>
            <person name="Bankier A.T."/>
            <person name="Lehmann R."/>
            <person name="Hamlin N."/>
            <person name="Davies R."/>
            <person name="Gaudet P."/>
            <person name="Fey P."/>
            <person name="Pilcher K."/>
            <person name="Chen G."/>
            <person name="Saunders D."/>
            <person name="Sodergren E.J."/>
            <person name="Davis P."/>
            <person name="Kerhornou A."/>
            <person name="Nie X."/>
            <person name="Hall N."/>
            <person name="Anjard C."/>
            <person name="Hemphill L."/>
            <person name="Bason N."/>
            <person name="Farbrother P."/>
            <person name="Desany B."/>
            <person name="Just E."/>
            <person name="Morio T."/>
            <person name="Rost R."/>
            <person name="Churcher C.M."/>
            <person name="Cooper J."/>
            <person name="Haydock S."/>
            <person name="van Driessche N."/>
            <person name="Cronin A."/>
            <person name="Goodhead I."/>
            <person name="Muzny D.M."/>
            <person name="Mourier T."/>
            <person name="Pain A."/>
            <person name="Lu M."/>
            <person name="Harper D."/>
            <person name="Lindsay R."/>
            <person name="Hauser H."/>
            <person name="James K.D."/>
            <person name="Quiles M."/>
            <person name="Madan Babu M."/>
            <person name="Saito T."/>
            <person name="Buchrieser C."/>
            <person name="Wardroper A."/>
            <person name="Felder M."/>
            <person name="Thangavelu M."/>
            <person name="Johnson D."/>
            <person name="Knights A."/>
            <person name="Loulseged H."/>
            <person name="Mungall K.L."/>
            <person name="Oliver K."/>
            <person name="Price C."/>
            <person name="Quail M.A."/>
            <person name="Urushihara H."/>
            <person name="Hernandez J."/>
            <person name="Rabbinowitsch E."/>
            <person name="Steffen D."/>
            <person name="Sanders M."/>
            <person name="Ma J."/>
            <person name="Kohara Y."/>
            <person name="Sharp S."/>
            <person name="Simmonds M.N."/>
            <person name="Spiegler S."/>
            <person name="Tivey A."/>
            <person name="Sugano S."/>
            <person name="White B."/>
            <person name="Walker D."/>
            <person name="Woodward J.R."/>
            <person name="Winckler T."/>
            <person name="Tanaka Y."/>
            <person name="Shaulsky G."/>
            <person name="Schleicher M."/>
            <person name="Weinstock G.M."/>
            <person name="Rosenthal A."/>
            <person name="Cox E.C."/>
            <person name="Chisholm R.L."/>
            <person name="Gibbs R.A."/>
            <person name="Loomis W.F."/>
            <person name="Platzer M."/>
            <person name="Kay R.R."/>
            <person name="Williams J.G."/>
            <person name="Dear P.H."/>
            <person name="Noegel A.A."/>
            <person name="Barrell B.G."/>
            <person name="Kuspa A."/>
        </authorList>
    </citation>
    <scope>NUCLEOTIDE SEQUENCE [LARGE SCALE GENOMIC DNA]</scope>
    <source>
        <strain>AX4</strain>
    </source>
</reference>
<reference key="2">
    <citation type="journal article" date="2006" name="Eur. J. Cell Biol.">
        <title>The Dictyostelium repertoire of seven transmembrane domain receptors.</title>
        <authorList>
            <person name="Prabhu Y."/>
            <person name="Eichinger L."/>
        </authorList>
    </citation>
    <scope>NOMENCLATURE</scope>
</reference>
<reference key="3">
    <citation type="journal article" date="2007" name="BMC Dev. Biol.">
        <title>GrlJ, a Dictyostelium GABAB-like receptor with roles in post-aggregation development.</title>
        <authorList>
            <person name="Prabhu Y."/>
            <person name="Mueller R."/>
            <person name="Anjard C."/>
            <person name="Noegel A.A."/>
        </authorList>
    </citation>
    <scope>DEVELOPMENTAL STAGE</scope>
</reference>
<reference key="4">
    <citation type="journal article" date="2008" name="BMC Microbiol.">
        <title>Dictyostelium transcriptional responses to Pseudomonas aeruginosa: common and specific effects from PAO1 and PA14 strains.</title>
        <authorList>
            <person name="Carilla-Latorre S."/>
            <person name="Calvo-Garrido J."/>
            <person name="Bloomfield G."/>
            <person name="Skelton J."/>
            <person name="Kay R.R."/>
            <person name="Ivens A."/>
            <person name="Martinez J.L."/>
            <person name="Escalante R."/>
        </authorList>
    </citation>
    <scope>INDUCTION [LARGE SCALE ANALYSIS]</scope>
</reference>
<comment type="subcellular location">
    <subcellularLocation>
        <location evidence="5">Membrane</location>
        <topology evidence="5">Multi-pass membrane protein</topology>
    </subcellularLocation>
</comment>
<comment type="developmental stage">
    <text evidence="3">Increased levels found from the tight aggregation stage onward. Levels stayed high during late development. Clear expression at 24 hours when fruiting body formation is close to completion.</text>
</comment>
<comment type="induction">
    <text evidence="4">Down-regulated by Pseudomonas aeruginosa, PAO1 strain and PA14 strain infection.</text>
</comment>
<comment type="similarity">
    <text evidence="5">In the N-terminal section; belongs to the BMP lipoprotein family.</text>
</comment>
<comment type="similarity">
    <text evidence="5">In the C-terminal section; belongs to the G-protein coupled receptor 3 family. GABA-B receptor subfamily.</text>
</comment>
<name>GRLF_DICDI</name>
<evidence type="ECO:0000255" key="1"/>
<evidence type="ECO:0000256" key="2">
    <source>
        <dbReference type="SAM" id="MobiDB-lite"/>
    </source>
</evidence>
<evidence type="ECO:0000269" key="3">
    <source>
    </source>
</evidence>
<evidence type="ECO:0000269" key="4">
    <source>
    </source>
</evidence>
<evidence type="ECO:0000305" key="5"/>
<protein>
    <recommendedName>
        <fullName>Metabotropic glutamate receptor-like protein F</fullName>
    </recommendedName>
</protein>
<proteinExistence type="evidence at transcript level"/>
<keyword id="KW-0175">Coiled coil</keyword>
<keyword id="KW-0297">G-protein coupled receptor</keyword>
<keyword id="KW-0325">Glycoprotein</keyword>
<keyword id="KW-0472">Membrane</keyword>
<keyword id="KW-0675">Receptor</keyword>
<keyword id="KW-1185">Reference proteome</keyword>
<keyword id="KW-0732">Signal</keyword>
<keyword id="KW-0807">Transducer</keyword>
<keyword id="KW-0812">Transmembrane</keyword>
<keyword id="KW-1133">Transmembrane helix</keyword>
<gene>
    <name type="primary">grlF</name>
    <name type="ORF">DDB_G0282175</name>
</gene>
<sequence>MKIKNFIYFLIYFIFLFKVINGQNKTCKISVLLSGDKSDLGYNYMMNEARVLAESQLHMYPFSIYYEHLEESTLEAEHAIQDSVDKGANLIVVSSVIHFSLGVKYATKYKDEPIYWIIRGSKLVPTLPKVVILNFNSFELHYLLGYYAGLATKTGVVGFVSPGIGINTLSCDNSFYIGAKYARSNITFLDIHTGSWYNPEVSYKAAQKLIENGADVIGMSQDDMSVQKAIMDSGGLGLGVTGYPGHYQFGSDVAYSYLTNWTNLFITYANHVINDDWPAFDSFFTNLSRKDAIFMDDFSFRVPIDIQTKTKIELENLMNTSYAPYKSDPILESIGLQFSGNWINDTQFRANTKILPSYGDSTVDYPESLKIGVTVVSGFCIFLCLISMIIVIKFKEAKVIKSSSPIFCLLILFGCIVIFVGCIMFARSPTDGSCRSRVWLLSLGYTIFLGNLMVKNWRIWLLFDNPKLKKRAITNWKLYPWVSGIVIIDIVILSIWQALGDIVAESRTGIDSLTKYEYRNVCASSDQGSIALYLLLVFHGLILLVACFISFKIKVVDIEEFNESKPITTSVYIITFCLFIVIPIMVSSPTVTTQTTIICICALITTMLSIILLFGTKFFKMITVGLELGQTFVTSTKSSSHSQRTKSSKSSNGSGPKINGFGGNVLNLDDDSDEISSEKEKKKPIESNPKDHMAVFTSDEETSKASKFSSEQFSREQINDNIILENNNDNEEKQKDEEEIKEEKLLVSEIQAKRLSLEQNGQTEIDSNDV</sequence>